<sequence length="527" mass="60772">MKRDFLGRTLAVIEDLSVEEQMFLYEKTRELKQRWYSGEDVSDFRIKKRNVGIYIVFVEPSTRTKESFINAAKFHSGPNVKVNVFDSEHSSFNKQESYTDTFSMLTGYSDYSIFVVRTRLEGVCRLLERRISEFASRNGIEVPSFINAGDGKHEHPTQELLDEYTFLEQNGFDNSFIHVALVGDLLHGRTVHSKVNGLKIFKNVKVDLVAPEELMMPEHYVEKMKKNGFEVRIFSSIREYLDQKDVAKIWYFTRLQLERMGEDILEKVHVLREAVTFKKEYLDALPEGVKFYHPLPRHKVYPTIPNFLDTLPLNGWETQARNGYWVRIVLLSMFGGALEAPFDTSKKEEKPEEDFIIPAPITHGSKGVQKEGKRGIKPIENGTVIDHIAKGKTPEEIYSTILKIRKILRLYDVDSADGIFRSSDGSFKGYISLPDRYLSKKEIKKLSAISPNTTVNIIKNSTVVEKYRIKLPPTIYGFEELRCKNENCITNPAHGENASPSFVRNEKGQFICEYCETPHSFEEIWSI</sequence>
<accession>P96111</accession>
<gene>
    <name type="primary">pyrBI</name>
    <name type="ordered locus">TM_1642</name>
</gene>
<feature type="chain" id="PRO_0000113240" description="Protein PyrBI">
    <location>
        <begin position="1"/>
        <end position="527"/>
    </location>
</feature>
<feature type="region of interest" description="Aspartate carbamoyltransferase">
    <location>
        <begin position="1"/>
        <end position="342"/>
    </location>
</feature>
<feature type="region of interest" description="Linker">
    <location>
        <begin position="343"/>
        <end position="357"/>
    </location>
</feature>
<feature type="region of interest" description="Aspartate carbamoyltransferase regulatory region">
    <location>
        <begin position="368"/>
        <end position="527"/>
    </location>
</feature>
<feature type="binding site" evidence="1">
    <location>
        <position position="483"/>
    </location>
    <ligand>
        <name>Zn(2+)</name>
        <dbReference type="ChEBI" id="CHEBI:29105"/>
    </ligand>
</feature>
<feature type="binding site" evidence="1">
    <location>
        <position position="488"/>
    </location>
    <ligand>
        <name>Zn(2+)</name>
        <dbReference type="ChEBI" id="CHEBI:29105"/>
    </ligand>
</feature>
<feature type="binding site" evidence="1">
    <location>
        <position position="512"/>
    </location>
    <ligand>
        <name>Zn(2+)</name>
        <dbReference type="ChEBI" id="CHEBI:29105"/>
    </ligand>
</feature>
<feature type="binding site" evidence="1">
    <location>
        <position position="515"/>
    </location>
    <ligand>
        <name>Zn(2+)</name>
        <dbReference type="ChEBI" id="CHEBI:29105"/>
    </ligand>
</feature>
<feature type="sequence conflict" description="In Ref. 1; CAA71345." evidence="2" ref="1">
    <original>WSI</original>
    <variation>T</variation>
    <location>
        <begin position="525"/>
        <end position="527"/>
    </location>
</feature>
<reference key="1">
    <citation type="submission" date="1996-12" db="EMBL/GenBank/DDBJ databases">
        <authorList>
            <person name="van de Casteele M.F.J."/>
            <person name="Chen P."/>
            <person name="van Vliet F."/>
            <person name="Legrain C."/>
            <person name="Cunin R."/>
            <person name="Glansdorff N."/>
        </authorList>
    </citation>
    <scope>NUCLEOTIDE SEQUENCE [GENOMIC DNA]</scope>
    <source>
        <strain>ATCC 43589 / DSM 3109 / JCM 10099 / NBRC 100826 / MSB8</strain>
    </source>
</reference>
<reference key="2">
    <citation type="journal article" date="1999" name="Nature">
        <title>Evidence for lateral gene transfer between Archaea and Bacteria from genome sequence of Thermotoga maritima.</title>
        <authorList>
            <person name="Nelson K.E."/>
            <person name="Clayton R.A."/>
            <person name="Gill S.R."/>
            <person name="Gwinn M.L."/>
            <person name="Dodson R.J."/>
            <person name="Haft D.H."/>
            <person name="Hickey E.K."/>
            <person name="Peterson J.D."/>
            <person name="Nelson W.C."/>
            <person name="Ketchum K.A."/>
            <person name="McDonald L.A."/>
            <person name="Utterback T.R."/>
            <person name="Malek J.A."/>
            <person name="Linher K.D."/>
            <person name="Garrett M.M."/>
            <person name="Stewart A.M."/>
            <person name="Cotton M.D."/>
            <person name="Pratt M.S."/>
            <person name="Phillips C.A."/>
            <person name="Richardson D.L."/>
            <person name="Heidelberg J.F."/>
            <person name="Sutton G.G."/>
            <person name="Fleischmann R.D."/>
            <person name="Eisen J.A."/>
            <person name="White O."/>
            <person name="Salzberg S.L."/>
            <person name="Smith H.O."/>
            <person name="Venter J.C."/>
            <person name="Fraser C.M."/>
        </authorList>
    </citation>
    <scope>NUCLEOTIDE SEQUENCE [LARGE SCALE GENOMIC DNA]</scope>
    <source>
        <strain>ATCC 43589 / DSM 3109 / JCM 10099 / NBRC 100826 / MSB8</strain>
    </source>
</reference>
<organism>
    <name type="scientific">Thermotoga maritima (strain ATCC 43589 / DSM 3109 / JCM 10099 / NBRC 100826 / MSB8)</name>
    <dbReference type="NCBI Taxonomy" id="243274"/>
    <lineage>
        <taxon>Bacteria</taxon>
        <taxon>Thermotogati</taxon>
        <taxon>Thermotogota</taxon>
        <taxon>Thermotogae</taxon>
        <taxon>Thermotogales</taxon>
        <taxon>Thermotogaceae</taxon>
        <taxon>Thermotoga</taxon>
    </lineage>
</organism>
<comment type="catalytic activity">
    <reaction>
        <text>carbamoyl phosphate + L-aspartate = N-carbamoyl-L-aspartate + phosphate + H(+)</text>
        <dbReference type="Rhea" id="RHEA:20013"/>
        <dbReference type="ChEBI" id="CHEBI:15378"/>
        <dbReference type="ChEBI" id="CHEBI:29991"/>
        <dbReference type="ChEBI" id="CHEBI:32814"/>
        <dbReference type="ChEBI" id="CHEBI:43474"/>
        <dbReference type="ChEBI" id="CHEBI:58228"/>
        <dbReference type="EC" id="2.1.3.2"/>
    </reaction>
</comment>
<comment type="pathway">
    <text>Pyrimidine metabolism; UMP biosynthesis via de novo pathway; (S)-dihydroorotate from bicarbonate: step 2/3.</text>
</comment>
<comment type="similarity">
    <text evidence="2">In the N-terminal section; belongs to the aspartate/ornithine carbamoyltransferase superfamily. ATCase family.</text>
</comment>
<comment type="similarity">
    <text evidence="2">In the C-terminal section; belongs to the PyrI family.</text>
</comment>
<protein>
    <recommendedName>
        <fullName>Protein PyrBI</fullName>
    </recommendedName>
    <domain>
        <recommendedName>
            <fullName>Aspartate carbamoyltransferase</fullName>
            <ecNumber>2.1.3.2</ecNumber>
        </recommendedName>
        <alternativeName>
            <fullName>Aspartate transcarbamylase</fullName>
            <shortName>ATCase</shortName>
        </alternativeName>
    </domain>
    <domain>
        <recommendedName>
            <fullName>Aspartate carbamoyltransferase regulatory region</fullName>
        </recommendedName>
    </domain>
</protein>
<name>PYRB_THEMA</name>
<evidence type="ECO:0000250" key="1"/>
<evidence type="ECO:0000305" key="2"/>
<dbReference type="EC" id="2.1.3.2"/>
<dbReference type="EMBL" id="Y10300">
    <property type="protein sequence ID" value="CAA71345.1"/>
    <property type="molecule type" value="Genomic_DNA"/>
</dbReference>
<dbReference type="EMBL" id="AE000512">
    <property type="protein sequence ID" value="AAD36709.1"/>
    <property type="molecule type" value="Genomic_DNA"/>
</dbReference>
<dbReference type="PIR" id="B72231">
    <property type="entry name" value="B72231"/>
</dbReference>
<dbReference type="RefSeq" id="NP_229442.1">
    <property type="nucleotide sequence ID" value="NC_000853.1"/>
</dbReference>
<dbReference type="RefSeq" id="WP_004082131.1">
    <property type="nucleotide sequence ID" value="NC_000853.1"/>
</dbReference>
<dbReference type="SMR" id="P96111"/>
<dbReference type="STRING" id="243274.TM_1642"/>
<dbReference type="PaxDb" id="243274-THEMA_06035"/>
<dbReference type="EnsemblBacteria" id="AAD36709">
    <property type="protein sequence ID" value="AAD36709"/>
    <property type="gene ID" value="TM_1642"/>
</dbReference>
<dbReference type="KEGG" id="tma:TM1642"/>
<dbReference type="KEGG" id="tmi:THEMA_06035"/>
<dbReference type="KEGG" id="tmm:Tmari_1651"/>
<dbReference type="KEGG" id="tmw:THMA_1683"/>
<dbReference type="eggNOG" id="COG0540">
    <property type="taxonomic scope" value="Bacteria"/>
</dbReference>
<dbReference type="eggNOG" id="COG1781">
    <property type="taxonomic scope" value="Bacteria"/>
</dbReference>
<dbReference type="InParanoid" id="P96111"/>
<dbReference type="OrthoDB" id="9802587at2"/>
<dbReference type="BioCyc" id="MetaCyc:MONOMER-503"/>
<dbReference type="BRENDA" id="2.1.3.2">
    <property type="organism ID" value="6331"/>
</dbReference>
<dbReference type="UniPathway" id="UPA00070">
    <property type="reaction ID" value="UER00116"/>
</dbReference>
<dbReference type="Proteomes" id="UP000008183">
    <property type="component" value="Chromosome"/>
</dbReference>
<dbReference type="GO" id="GO:0009347">
    <property type="term" value="C:aspartate carbamoyltransferase complex"/>
    <property type="evidence" value="ECO:0000318"/>
    <property type="project" value="GO_Central"/>
</dbReference>
<dbReference type="GO" id="GO:0016597">
    <property type="term" value="F:amino acid binding"/>
    <property type="evidence" value="ECO:0007669"/>
    <property type="project" value="InterPro"/>
</dbReference>
<dbReference type="GO" id="GO:0004070">
    <property type="term" value="F:aspartate carbamoyltransferase activity"/>
    <property type="evidence" value="ECO:0007669"/>
    <property type="project" value="UniProtKB-EC"/>
</dbReference>
<dbReference type="GO" id="GO:0046872">
    <property type="term" value="F:metal ion binding"/>
    <property type="evidence" value="ECO:0007669"/>
    <property type="project" value="UniProtKB-KW"/>
</dbReference>
<dbReference type="GO" id="GO:0006207">
    <property type="term" value="P:'de novo' pyrimidine nucleobase biosynthetic process"/>
    <property type="evidence" value="ECO:0000318"/>
    <property type="project" value="GO_Central"/>
</dbReference>
<dbReference type="GO" id="GO:0044205">
    <property type="term" value="P:'de novo' UMP biosynthetic process"/>
    <property type="evidence" value="ECO:0007669"/>
    <property type="project" value="UniProtKB-UniPathway"/>
</dbReference>
<dbReference type="GO" id="GO:0006520">
    <property type="term" value="P:amino acid metabolic process"/>
    <property type="evidence" value="ECO:0007669"/>
    <property type="project" value="InterPro"/>
</dbReference>
<dbReference type="Gene3D" id="2.30.30.20">
    <property type="entry name" value="Aspartate carbamoyltransferase regulatory subunit, C-terminal domain"/>
    <property type="match status" value="1"/>
</dbReference>
<dbReference type="Gene3D" id="3.30.70.140">
    <property type="entry name" value="Aspartate carbamoyltransferase regulatory subunit, N-terminal domain"/>
    <property type="match status" value="1"/>
</dbReference>
<dbReference type="Gene3D" id="3.40.50.1370">
    <property type="entry name" value="Aspartate/ornithine carbamoyltransferase"/>
    <property type="match status" value="2"/>
</dbReference>
<dbReference type="InterPro" id="IPR006132">
    <property type="entry name" value="Asp/Orn_carbamoyltranf_P-bd"/>
</dbReference>
<dbReference type="InterPro" id="IPR006130">
    <property type="entry name" value="Asp/Orn_carbamoylTrfase"/>
</dbReference>
<dbReference type="InterPro" id="IPR036901">
    <property type="entry name" value="Asp/Orn_carbamoylTrfase_sf"/>
</dbReference>
<dbReference type="InterPro" id="IPR002082">
    <property type="entry name" value="Asp_carbamoyltransf"/>
</dbReference>
<dbReference type="InterPro" id="IPR006131">
    <property type="entry name" value="Asp_carbamoyltransf_Asp/Orn-bd"/>
</dbReference>
<dbReference type="InterPro" id="IPR020545">
    <property type="entry name" value="Asp_carbamoyltransf_reg_N"/>
</dbReference>
<dbReference type="InterPro" id="IPR002801">
    <property type="entry name" value="Asp_carbamoylTrfase_reg"/>
</dbReference>
<dbReference type="InterPro" id="IPR020542">
    <property type="entry name" value="Asp_carbamoyltrfase_reg_C"/>
</dbReference>
<dbReference type="InterPro" id="IPR036792">
    <property type="entry name" value="Asp_carbatrfase_reg_C_sf"/>
</dbReference>
<dbReference type="InterPro" id="IPR036793">
    <property type="entry name" value="Asp_carbatrfase_reg_N_sf"/>
</dbReference>
<dbReference type="NCBIfam" id="TIGR00670">
    <property type="entry name" value="asp_carb_tr"/>
    <property type="match status" value="1"/>
</dbReference>
<dbReference type="NCBIfam" id="NF009916">
    <property type="entry name" value="PRK13376.1"/>
    <property type="match status" value="1"/>
</dbReference>
<dbReference type="PANTHER" id="PTHR35805">
    <property type="entry name" value="ASPARTATE CARBAMOYLTRANSFERASE REGULATORY CHAIN"/>
    <property type="match status" value="1"/>
</dbReference>
<dbReference type="PANTHER" id="PTHR35805:SF1">
    <property type="entry name" value="ASPARTATE CARBAMOYLTRANSFERASE REGULATORY CHAIN"/>
    <property type="match status" value="1"/>
</dbReference>
<dbReference type="Pfam" id="PF00185">
    <property type="entry name" value="OTCace"/>
    <property type="match status" value="1"/>
</dbReference>
<dbReference type="Pfam" id="PF02729">
    <property type="entry name" value="OTCace_N"/>
    <property type="match status" value="1"/>
</dbReference>
<dbReference type="Pfam" id="PF01948">
    <property type="entry name" value="PyrI"/>
    <property type="match status" value="1"/>
</dbReference>
<dbReference type="Pfam" id="PF02748">
    <property type="entry name" value="PyrI_C"/>
    <property type="match status" value="1"/>
</dbReference>
<dbReference type="PRINTS" id="PR00101">
    <property type="entry name" value="ATCASE"/>
</dbReference>
<dbReference type="SUPFAM" id="SSF57825">
    <property type="entry name" value="Aspartate carbamoyltransferase, Regulatory-chain, C-terminal domain"/>
    <property type="match status" value="1"/>
</dbReference>
<dbReference type="SUPFAM" id="SSF54893">
    <property type="entry name" value="Aspartate carbamoyltransferase, Regulatory-chain, N-terminal domain"/>
    <property type="match status" value="1"/>
</dbReference>
<dbReference type="SUPFAM" id="SSF53671">
    <property type="entry name" value="Aspartate/ornithine carbamoyltransferase"/>
    <property type="match status" value="1"/>
</dbReference>
<dbReference type="PROSITE" id="PS00097">
    <property type="entry name" value="CARBAMOYLTRANSFERASE"/>
    <property type="match status" value="1"/>
</dbReference>
<proteinExistence type="inferred from homology"/>
<keyword id="KW-0479">Metal-binding</keyword>
<keyword id="KW-0511">Multifunctional enzyme</keyword>
<keyword id="KW-0665">Pyrimidine biosynthesis</keyword>
<keyword id="KW-1185">Reference proteome</keyword>
<keyword id="KW-0808">Transferase</keyword>
<keyword id="KW-0862">Zinc</keyword>